<accession>A1KPT7</accession>
<keyword id="KW-0067">ATP-binding</keyword>
<keyword id="KW-0963">Cytoplasm</keyword>
<keyword id="KW-0436">Ligase</keyword>
<keyword id="KW-0547">Nucleotide-binding</keyword>
<keyword id="KW-0566">Pantothenate biosynthesis</keyword>
<organism>
    <name type="scientific">Mycobacterium bovis (strain BCG / Pasteur 1173P2)</name>
    <dbReference type="NCBI Taxonomy" id="410289"/>
    <lineage>
        <taxon>Bacteria</taxon>
        <taxon>Bacillati</taxon>
        <taxon>Actinomycetota</taxon>
        <taxon>Actinomycetes</taxon>
        <taxon>Mycobacteriales</taxon>
        <taxon>Mycobacteriaceae</taxon>
        <taxon>Mycobacterium</taxon>
        <taxon>Mycobacterium tuberculosis complex</taxon>
    </lineage>
</organism>
<gene>
    <name evidence="1" type="primary">panC</name>
    <name type="ordered locus">BCG_3666c</name>
</gene>
<feature type="chain" id="PRO_0000305486" description="Pantothenate synthetase">
    <location>
        <begin position="1"/>
        <end position="309"/>
    </location>
</feature>
<feature type="active site" description="Proton donor" evidence="1">
    <location>
        <position position="47"/>
    </location>
</feature>
<feature type="binding site" evidence="1">
    <location>
        <begin position="40"/>
        <end position="47"/>
    </location>
    <ligand>
        <name>ATP</name>
        <dbReference type="ChEBI" id="CHEBI:30616"/>
    </ligand>
</feature>
<feature type="binding site" evidence="1">
    <location>
        <position position="72"/>
    </location>
    <ligand>
        <name>(R)-pantoate</name>
        <dbReference type="ChEBI" id="CHEBI:15980"/>
    </ligand>
</feature>
<feature type="binding site" evidence="1">
    <location>
        <position position="72"/>
    </location>
    <ligand>
        <name>beta-alanine</name>
        <dbReference type="ChEBI" id="CHEBI:57966"/>
    </ligand>
</feature>
<feature type="binding site" evidence="1">
    <location>
        <begin position="158"/>
        <end position="161"/>
    </location>
    <ligand>
        <name>ATP</name>
        <dbReference type="ChEBI" id="CHEBI:30616"/>
    </ligand>
</feature>
<feature type="binding site" evidence="1">
    <location>
        <position position="164"/>
    </location>
    <ligand>
        <name>(R)-pantoate</name>
        <dbReference type="ChEBI" id="CHEBI:15980"/>
    </ligand>
</feature>
<feature type="binding site" evidence="1">
    <location>
        <position position="187"/>
    </location>
    <ligand>
        <name>ATP</name>
        <dbReference type="ChEBI" id="CHEBI:30616"/>
    </ligand>
</feature>
<feature type="binding site" evidence="1">
    <location>
        <begin position="195"/>
        <end position="198"/>
    </location>
    <ligand>
        <name>ATP</name>
        <dbReference type="ChEBI" id="CHEBI:30616"/>
    </ligand>
</feature>
<dbReference type="EC" id="6.3.2.1" evidence="1"/>
<dbReference type="EMBL" id="AM408590">
    <property type="protein sequence ID" value="CAL73655.1"/>
    <property type="molecule type" value="Genomic_DNA"/>
</dbReference>
<dbReference type="RefSeq" id="WP_003419526.1">
    <property type="nucleotide sequence ID" value="NC_008769.1"/>
</dbReference>
<dbReference type="SMR" id="A1KPT7"/>
<dbReference type="KEGG" id="mbb:BCG_3666c"/>
<dbReference type="HOGENOM" id="CLU_047148_0_2_11"/>
<dbReference type="UniPathway" id="UPA00028">
    <property type="reaction ID" value="UER00005"/>
</dbReference>
<dbReference type="Proteomes" id="UP000001472">
    <property type="component" value="Chromosome"/>
</dbReference>
<dbReference type="GO" id="GO:0005829">
    <property type="term" value="C:cytosol"/>
    <property type="evidence" value="ECO:0007669"/>
    <property type="project" value="TreeGrafter"/>
</dbReference>
<dbReference type="GO" id="GO:0005524">
    <property type="term" value="F:ATP binding"/>
    <property type="evidence" value="ECO:0007669"/>
    <property type="project" value="UniProtKB-KW"/>
</dbReference>
<dbReference type="GO" id="GO:0004592">
    <property type="term" value="F:pantoate-beta-alanine ligase activity"/>
    <property type="evidence" value="ECO:0007669"/>
    <property type="project" value="UniProtKB-UniRule"/>
</dbReference>
<dbReference type="GO" id="GO:0015940">
    <property type="term" value="P:pantothenate biosynthetic process"/>
    <property type="evidence" value="ECO:0007669"/>
    <property type="project" value="UniProtKB-UniRule"/>
</dbReference>
<dbReference type="CDD" id="cd00560">
    <property type="entry name" value="PanC"/>
    <property type="match status" value="1"/>
</dbReference>
<dbReference type="FunFam" id="3.30.1300.10:FF:000005">
    <property type="entry name" value="Pantothenate synthetase"/>
    <property type="match status" value="1"/>
</dbReference>
<dbReference type="FunFam" id="3.40.50.620:FF:000114">
    <property type="entry name" value="Pantothenate synthetase"/>
    <property type="match status" value="1"/>
</dbReference>
<dbReference type="Gene3D" id="3.40.50.620">
    <property type="entry name" value="HUPs"/>
    <property type="match status" value="1"/>
</dbReference>
<dbReference type="Gene3D" id="3.30.1300.10">
    <property type="entry name" value="Pantoate-beta-alanine ligase, C-terminal domain"/>
    <property type="match status" value="1"/>
</dbReference>
<dbReference type="HAMAP" id="MF_00158">
    <property type="entry name" value="PanC"/>
    <property type="match status" value="1"/>
</dbReference>
<dbReference type="InterPro" id="IPR003721">
    <property type="entry name" value="Pantoate_ligase"/>
</dbReference>
<dbReference type="InterPro" id="IPR042176">
    <property type="entry name" value="Pantoate_ligase_C"/>
</dbReference>
<dbReference type="InterPro" id="IPR014729">
    <property type="entry name" value="Rossmann-like_a/b/a_fold"/>
</dbReference>
<dbReference type="NCBIfam" id="TIGR00018">
    <property type="entry name" value="panC"/>
    <property type="match status" value="1"/>
</dbReference>
<dbReference type="PANTHER" id="PTHR21299">
    <property type="entry name" value="CYTIDYLATE KINASE/PANTOATE-BETA-ALANINE LIGASE"/>
    <property type="match status" value="1"/>
</dbReference>
<dbReference type="PANTHER" id="PTHR21299:SF1">
    <property type="entry name" value="PANTOATE--BETA-ALANINE LIGASE"/>
    <property type="match status" value="1"/>
</dbReference>
<dbReference type="Pfam" id="PF02569">
    <property type="entry name" value="Pantoate_ligase"/>
    <property type="match status" value="1"/>
</dbReference>
<dbReference type="SUPFAM" id="SSF52374">
    <property type="entry name" value="Nucleotidylyl transferase"/>
    <property type="match status" value="1"/>
</dbReference>
<reference key="1">
    <citation type="journal article" date="2007" name="Proc. Natl. Acad. Sci. U.S.A.">
        <title>Genome plasticity of BCG and impact on vaccine efficacy.</title>
        <authorList>
            <person name="Brosch R."/>
            <person name="Gordon S.V."/>
            <person name="Garnier T."/>
            <person name="Eiglmeier K."/>
            <person name="Frigui W."/>
            <person name="Valenti P."/>
            <person name="Dos Santos S."/>
            <person name="Duthoy S."/>
            <person name="Lacroix C."/>
            <person name="Garcia-Pelayo C."/>
            <person name="Inwald J.K."/>
            <person name="Golby P."/>
            <person name="Garcia J.N."/>
            <person name="Hewinson R.G."/>
            <person name="Behr M.A."/>
            <person name="Quail M.A."/>
            <person name="Churcher C."/>
            <person name="Barrell B.G."/>
            <person name="Parkhill J."/>
            <person name="Cole S.T."/>
        </authorList>
    </citation>
    <scope>NUCLEOTIDE SEQUENCE [LARGE SCALE GENOMIC DNA]</scope>
    <source>
        <strain>BCG / Pasteur 1173P2</strain>
    </source>
</reference>
<evidence type="ECO:0000255" key="1">
    <source>
        <dbReference type="HAMAP-Rule" id="MF_00158"/>
    </source>
</evidence>
<proteinExistence type="inferred from homology"/>
<name>PANC_MYCBP</name>
<comment type="function">
    <text evidence="1">Catalyzes the condensation of pantoate with beta-alanine in an ATP-dependent reaction via a pantoyl-adenylate intermediate.</text>
</comment>
<comment type="catalytic activity">
    <reaction evidence="1">
        <text>(R)-pantoate + beta-alanine + ATP = (R)-pantothenate + AMP + diphosphate + H(+)</text>
        <dbReference type="Rhea" id="RHEA:10912"/>
        <dbReference type="ChEBI" id="CHEBI:15378"/>
        <dbReference type="ChEBI" id="CHEBI:15980"/>
        <dbReference type="ChEBI" id="CHEBI:29032"/>
        <dbReference type="ChEBI" id="CHEBI:30616"/>
        <dbReference type="ChEBI" id="CHEBI:33019"/>
        <dbReference type="ChEBI" id="CHEBI:57966"/>
        <dbReference type="ChEBI" id="CHEBI:456215"/>
        <dbReference type="EC" id="6.3.2.1"/>
    </reaction>
</comment>
<comment type="pathway">
    <text evidence="1">Cofactor biosynthesis; (R)-pantothenate biosynthesis; (R)-pantothenate from (R)-pantoate and beta-alanine: step 1/1.</text>
</comment>
<comment type="subunit">
    <text evidence="1">Homodimer.</text>
</comment>
<comment type="subcellular location">
    <subcellularLocation>
        <location evidence="1">Cytoplasm</location>
    </subcellularLocation>
</comment>
<comment type="miscellaneous">
    <text evidence="1">The reaction proceeds by a bi uni uni bi ping pong mechanism.</text>
</comment>
<comment type="similarity">
    <text evidence="1">Belongs to the pantothenate synthetase family.</text>
</comment>
<sequence length="309" mass="32678">MTIPAFHPGELNVYSAPGDVADVSRALRLTGRRVMLVPTMGALHEGHLALVRAAKRVPGSVVVVSIFVNPMQFGAGEDLDAYPRTPDDDLAQLRAEGVEIAFTPTTAAMYPDGLRTTVQPGPLAAELEGGPRPTHFAGVLTVVLKLLQIVRPDRVFFGEKDYQQLVLIRQLVADFNLDVAVVGVPTVREADGLAMSSRNRYLDPAQRAAAVALSAALTAAAHAATAGAQAALDAARAVLDAAPGVAVDYLELRDIGLGPMPLNGSGRLLVAARLGTTRLLDNIAIEIGTFAGTDRPDGYRAILESHWRN</sequence>
<protein>
    <recommendedName>
        <fullName evidence="1">Pantothenate synthetase</fullName>
        <shortName evidence="1">PS</shortName>
        <ecNumber evidence="1">6.3.2.1</ecNumber>
    </recommendedName>
    <alternativeName>
        <fullName evidence="1">Pantoate--beta-alanine ligase</fullName>
    </alternativeName>
    <alternativeName>
        <fullName evidence="1">Pantoate-activating enzyme</fullName>
    </alternativeName>
</protein>